<dbReference type="EMBL" id="AE005174">
    <property type="protein sequence ID" value="AAG59377.1"/>
    <property type="molecule type" value="Genomic_DNA"/>
</dbReference>
<dbReference type="EMBL" id="BA000007">
    <property type="protein sequence ID" value="BAB38580.1"/>
    <property type="molecule type" value="Genomic_DNA"/>
</dbReference>
<dbReference type="PIR" id="E86114">
    <property type="entry name" value="E86114"/>
</dbReference>
<dbReference type="PIR" id="E91273">
    <property type="entry name" value="E91273"/>
</dbReference>
<dbReference type="RefSeq" id="NP_313184.1">
    <property type="nucleotide sequence ID" value="NC_002695.1"/>
</dbReference>
<dbReference type="RefSeq" id="WP_000220128.1">
    <property type="nucleotide sequence ID" value="NZ_VOAI01000008.1"/>
</dbReference>
<dbReference type="SMR" id="P0AF77"/>
<dbReference type="STRING" id="155864.Z5788"/>
<dbReference type="GeneID" id="913858"/>
<dbReference type="KEGG" id="ece:Z5788"/>
<dbReference type="KEGG" id="ecs:ECs_5157"/>
<dbReference type="PATRIC" id="fig|386585.9.peg.5391"/>
<dbReference type="eggNOG" id="COG3789">
    <property type="taxonomic scope" value="Bacteria"/>
</dbReference>
<dbReference type="HOGENOM" id="CLU_110701_0_0_6"/>
<dbReference type="OMA" id="EWYELFG"/>
<dbReference type="Proteomes" id="UP000000558">
    <property type="component" value="Chromosome"/>
</dbReference>
<dbReference type="Proteomes" id="UP000002519">
    <property type="component" value="Chromosome"/>
</dbReference>
<dbReference type="InterPro" id="IPR019231">
    <property type="entry name" value="DUF2170"/>
</dbReference>
<dbReference type="Pfam" id="PF09938">
    <property type="entry name" value="DUF2170"/>
    <property type="match status" value="1"/>
</dbReference>
<reference key="1">
    <citation type="journal article" date="2001" name="Nature">
        <title>Genome sequence of enterohaemorrhagic Escherichia coli O157:H7.</title>
        <authorList>
            <person name="Perna N.T."/>
            <person name="Plunkett G. III"/>
            <person name="Burland V."/>
            <person name="Mau B."/>
            <person name="Glasner J.D."/>
            <person name="Rose D.J."/>
            <person name="Mayhew G.F."/>
            <person name="Evans P.S."/>
            <person name="Gregor J."/>
            <person name="Kirkpatrick H.A."/>
            <person name="Posfai G."/>
            <person name="Hackett J."/>
            <person name="Klink S."/>
            <person name="Boutin A."/>
            <person name="Shao Y."/>
            <person name="Miller L."/>
            <person name="Grotbeck E.J."/>
            <person name="Davis N.W."/>
            <person name="Lim A."/>
            <person name="Dimalanta E.T."/>
            <person name="Potamousis K."/>
            <person name="Apodaca J."/>
            <person name="Anantharaman T.S."/>
            <person name="Lin J."/>
            <person name="Yen G."/>
            <person name="Schwartz D.C."/>
            <person name="Welch R.A."/>
            <person name="Blattner F.R."/>
        </authorList>
    </citation>
    <scope>NUCLEOTIDE SEQUENCE [LARGE SCALE GENOMIC DNA]</scope>
    <source>
        <strain>O157:H7 / EDL933 / ATCC 700927 / EHEC</strain>
    </source>
</reference>
<reference key="2">
    <citation type="journal article" date="2001" name="DNA Res.">
        <title>Complete genome sequence of enterohemorrhagic Escherichia coli O157:H7 and genomic comparison with a laboratory strain K-12.</title>
        <authorList>
            <person name="Hayashi T."/>
            <person name="Makino K."/>
            <person name="Ohnishi M."/>
            <person name="Kurokawa K."/>
            <person name="Ishii K."/>
            <person name="Yokoyama K."/>
            <person name="Han C.-G."/>
            <person name="Ohtsubo E."/>
            <person name="Nakayama K."/>
            <person name="Murata T."/>
            <person name="Tanaka M."/>
            <person name="Tobe T."/>
            <person name="Iida T."/>
            <person name="Takami H."/>
            <person name="Honda T."/>
            <person name="Sasakawa C."/>
            <person name="Ogasawara N."/>
            <person name="Yasunaga T."/>
            <person name="Kuhara S."/>
            <person name="Shiba T."/>
            <person name="Hattori M."/>
            <person name="Shinagawa H."/>
        </authorList>
    </citation>
    <scope>NUCLEOTIDE SEQUENCE [LARGE SCALE GENOMIC DNA]</scope>
    <source>
        <strain>O157:H7 / Sakai / RIMD 0509952 / EHEC</strain>
    </source>
</reference>
<protein>
    <recommendedName>
        <fullName>Uncharacterized protein YjfI</fullName>
    </recommendedName>
</protein>
<sequence>MTWNPLALATALQTVPEQNIDVTNSENALIIKMNDYGDLQINILFTSRQMIIETFICPVSSISNPDEFNTFLLRNQKMMPLSSVGISSVQQEEYYIVFGALSLKSSLEDILLEITSLVDNALDLAEITEEYSH</sequence>
<name>YJFI_ECO57</name>
<proteinExistence type="predicted"/>
<keyword id="KW-1185">Reference proteome</keyword>
<accession>P0AF77</accession>
<accession>P39291</accession>
<feature type="chain" id="PRO_0000169748" description="Uncharacterized protein YjfI">
    <location>
        <begin position="1"/>
        <end position="133"/>
    </location>
</feature>
<organism>
    <name type="scientific">Escherichia coli O157:H7</name>
    <dbReference type="NCBI Taxonomy" id="83334"/>
    <lineage>
        <taxon>Bacteria</taxon>
        <taxon>Pseudomonadati</taxon>
        <taxon>Pseudomonadota</taxon>
        <taxon>Gammaproteobacteria</taxon>
        <taxon>Enterobacterales</taxon>
        <taxon>Enterobacteriaceae</taxon>
        <taxon>Escherichia</taxon>
    </lineage>
</organism>
<gene>
    <name type="primary">yjfI</name>
    <name type="ordered locus">Z5788</name>
    <name type="ordered locus">ECs5157</name>
</gene>